<comment type="function">
    <text evidence="1">Heme chaperone required for the biogenesis of c-type cytochromes. Transiently binds heme delivered by CcmC and transfers the heme to apo-cytochromes in a process facilitated by CcmF and CcmH.</text>
</comment>
<comment type="subcellular location">
    <subcellularLocation>
        <location evidence="1">Cell inner membrane</location>
        <topology evidence="1">Single-pass type II membrane protein</topology>
        <orientation evidence="1">Periplasmic side</orientation>
    </subcellularLocation>
</comment>
<comment type="similarity">
    <text evidence="1">Belongs to the CcmE/CycJ family.</text>
</comment>
<sequence length="165" mass="17976">MSATAEQNARNPKGKGGFARTVSQRKRKRLFLIGGALAVLAVAVGLMLTAFNQDIRFFRTPADLTEQDMTSGARFRLGGLVEEGSVSRTGSELRFTVTDTIKTVKVVFEGIPPDLFREGQGVVAEGRFGSDGLFRADNVLAKHDENYVPKDLANSLKKKGVWEGK</sequence>
<protein>
    <recommendedName>
        <fullName evidence="1">Cytochrome c-type biogenesis protein CcmE</fullName>
    </recommendedName>
    <alternativeName>
        <fullName evidence="1">Cytochrome c maturation protein E</fullName>
    </alternativeName>
    <alternativeName>
        <fullName evidence="1">Heme chaperone CcmE</fullName>
    </alternativeName>
</protein>
<gene>
    <name evidence="1" type="primary">ccmE</name>
    <name evidence="1" type="synonym">cycJ</name>
    <name type="ordered locus">BCAN_A0623</name>
</gene>
<dbReference type="EMBL" id="CP000872">
    <property type="protein sequence ID" value="ABX61698.1"/>
    <property type="molecule type" value="Genomic_DNA"/>
</dbReference>
<dbReference type="RefSeq" id="WP_004690678.1">
    <property type="nucleotide sequence ID" value="NC_010103.1"/>
</dbReference>
<dbReference type="SMR" id="A9M9N4"/>
<dbReference type="GeneID" id="55590341"/>
<dbReference type="KEGG" id="bcs:BCAN_A0623"/>
<dbReference type="HOGENOM" id="CLU_079503_1_1_5"/>
<dbReference type="PhylomeDB" id="A9M9N4"/>
<dbReference type="Proteomes" id="UP000001385">
    <property type="component" value="Chromosome I"/>
</dbReference>
<dbReference type="GO" id="GO:0005886">
    <property type="term" value="C:plasma membrane"/>
    <property type="evidence" value="ECO:0007669"/>
    <property type="project" value="UniProtKB-SubCell"/>
</dbReference>
<dbReference type="GO" id="GO:0020037">
    <property type="term" value="F:heme binding"/>
    <property type="evidence" value="ECO:0007669"/>
    <property type="project" value="InterPro"/>
</dbReference>
<dbReference type="GO" id="GO:0046872">
    <property type="term" value="F:metal ion binding"/>
    <property type="evidence" value="ECO:0007669"/>
    <property type="project" value="UniProtKB-KW"/>
</dbReference>
<dbReference type="GO" id="GO:0017004">
    <property type="term" value="P:cytochrome complex assembly"/>
    <property type="evidence" value="ECO:0007669"/>
    <property type="project" value="UniProtKB-KW"/>
</dbReference>
<dbReference type="Gene3D" id="2.40.50.140">
    <property type="entry name" value="Nucleic acid-binding proteins"/>
    <property type="match status" value="1"/>
</dbReference>
<dbReference type="HAMAP" id="MF_01959">
    <property type="entry name" value="CcmE"/>
    <property type="match status" value="1"/>
</dbReference>
<dbReference type="InterPro" id="IPR004329">
    <property type="entry name" value="CcmE"/>
</dbReference>
<dbReference type="InterPro" id="IPR036127">
    <property type="entry name" value="CcmE-like_sf"/>
</dbReference>
<dbReference type="InterPro" id="IPR012340">
    <property type="entry name" value="NA-bd_OB-fold"/>
</dbReference>
<dbReference type="NCBIfam" id="NF009727">
    <property type="entry name" value="PRK13254.1-1"/>
    <property type="match status" value="1"/>
</dbReference>
<dbReference type="NCBIfam" id="NF009730">
    <property type="entry name" value="PRK13254.1-4"/>
    <property type="match status" value="1"/>
</dbReference>
<dbReference type="NCBIfam" id="NF009731">
    <property type="entry name" value="PRK13254.1-5"/>
    <property type="match status" value="1"/>
</dbReference>
<dbReference type="PANTHER" id="PTHR34128">
    <property type="entry name" value="CYTOCHROME C-TYPE BIOGENESIS PROTEIN CCME HOMOLOG, MITOCHONDRIAL"/>
    <property type="match status" value="1"/>
</dbReference>
<dbReference type="PANTHER" id="PTHR34128:SF2">
    <property type="entry name" value="CYTOCHROME C-TYPE BIOGENESIS PROTEIN CCME HOMOLOG, MITOCHONDRIAL"/>
    <property type="match status" value="1"/>
</dbReference>
<dbReference type="Pfam" id="PF03100">
    <property type="entry name" value="CcmE"/>
    <property type="match status" value="1"/>
</dbReference>
<dbReference type="SUPFAM" id="SSF82093">
    <property type="entry name" value="Heme chaperone CcmE"/>
    <property type="match status" value="1"/>
</dbReference>
<evidence type="ECO:0000255" key="1">
    <source>
        <dbReference type="HAMAP-Rule" id="MF_01959"/>
    </source>
</evidence>
<name>CCME_BRUC2</name>
<organism>
    <name type="scientific">Brucella canis (strain ATCC 23365 / NCTC 10854 / RM-666)</name>
    <dbReference type="NCBI Taxonomy" id="483179"/>
    <lineage>
        <taxon>Bacteria</taxon>
        <taxon>Pseudomonadati</taxon>
        <taxon>Pseudomonadota</taxon>
        <taxon>Alphaproteobacteria</taxon>
        <taxon>Hyphomicrobiales</taxon>
        <taxon>Brucellaceae</taxon>
        <taxon>Brucella/Ochrobactrum group</taxon>
        <taxon>Brucella</taxon>
    </lineage>
</organism>
<reference key="1">
    <citation type="submission" date="2007-10" db="EMBL/GenBank/DDBJ databases">
        <title>Brucella canis ATCC 23365 whole genome shotgun sequencing project.</title>
        <authorList>
            <person name="Setubal J.C."/>
            <person name="Bowns C."/>
            <person name="Boyle S."/>
            <person name="Crasta O.R."/>
            <person name="Czar M.J."/>
            <person name="Dharmanolla C."/>
            <person name="Gillespie J.J."/>
            <person name="Kenyon R.W."/>
            <person name="Lu J."/>
            <person name="Mane S."/>
            <person name="Mohapatra S."/>
            <person name="Nagrani S."/>
            <person name="Purkayastha A."/>
            <person name="Rajasimha H.K."/>
            <person name="Shallom J.M."/>
            <person name="Shallom S."/>
            <person name="Shukla M."/>
            <person name="Snyder E.E."/>
            <person name="Sobral B.W."/>
            <person name="Wattam A.R."/>
            <person name="Will R."/>
            <person name="Williams K."/>
            <person name="Yoo H."/>
            <person name="Bruce D."/>
            <person name="Detter C."/>
            <person name="Munk C."/>
            <person name="Brettin T.S."/>
        </authorList>
    </citation>
    <scope>NUCLEOTIDE SEQUENCE [LARGE SCALE GENOMIC DNA]</scope>
    <source>
        <strain>ATCC 23365 / NCTC 10854 / RM-666</strain>
    </source>
</reference>
<proteinExistence type="inferred from homology"/>
<accession>A9M9N4</accession>
<feature type="chain" id="PRO_1000088521" description="Cytochrome c-type biogenesis protein CcmE">
    <location>
        <begin position="1"/>
        <end position="165"/>
    </location>
</feature>
<feature type="topological domain" description="Cytoplasmic" evidence="1">
    <location>
        <begin position="1"/>
        <end position="29"/>
    </location>
</feature>
<feature type="transmembrane region" description="Helical; Signal-anchor for type II membrane protein" evidence="1">
    <location>
        <begin position="30"/>
        <end position="50"/>
    </location>
</feature>
<feature type="topological domain" description="Periplasmic" evidence="1">
    <location>
        <begin position="51"/>
        <end position="165"/>
    </location>
</feature>
<feature type="binding site" description="covalent" evidence="1">
    <location>
        <position position="143"/>
    </location>
    <ligand>
        <name>heme</name>
        <dbReference type="ChEBI" id="CHEBI:30413"/>
    </ligand>
</feature>
<feature type="binding site" description="axial binding residue" evidence="1">
    <location>
        <position position="147"/>
    </location>
    <ligand>
        <name>heme</name>
        <dbReference type="ChEBI" id="CHEBI:30413"/>
    </ligand>
    <ligandPart>
        <name>Fe</name>
        <dbReference type="ChEBI" id="CHEBI:18248"/>
    </ligandPart>
</feature>
<keyword id="KW-0997">Cell inner membrane</keyword>
<keyword id="KW-1003">Cell membrane</keyword>
<keyword id="KW-0201">Cytochrome c-type biogenesis</keyword>
<keyword id="KW-0349">Heme</keyword>
<keyword id="KW-0408">Iron</keyword>
<keyword id="KW-0472">Membrane</keyword>
<keyword id="KW-0479">Metal-binding</keyword>
<keyword id="KW-1185">Reference proteome</keyword>
<keyword id="KW-0735">Signal-anchor</keyword>
<keyword id="KW-0812">Transmembrane</keyword>
<keyword id="KW-1133">Transmembrane helix</keyword>